<protein>
    <recommendedName>
        <fullName evidence="5 6 8">Sarcoplasmic calcium-binding protein</fullName>
        <shortName evidence="5 6">SCP</shortName>
    </recommendedName>
    <allergenName evidence="7">Scy p 4.0101</allergenName>
</protein>
<evidence type="ECO:0000250" key="1">
    <source>
        <dbReference type="UniProtKB" id="P04571"/>
    </source>
</evidence>
<evidence type="ECO:0000255" key="2">
    <source>
        <dbReference type="PROSITE-ProRule" id="PRU00448"/>
    </source>
</evidence>
<evidence type="ECO:0000269" key="3">
    <source>
    </source>
</evidence>
<evidence type="ECO:0000269" key="4">
    <source>
    </source>
</evidence>
<evidence type="ECO:0000303" key="5">
    <source>
    </source>
</evidence>
<evidence type="ECO:0000303" key="6">
    <source>
    </source>
</evidence>
<evidence type="ECO:0000305" key="7"/>
<evidence type="ECO:0000312" key="8">
    <source>
        <dbReference type="EMBL" id="AFJ80778.1"/>
    </source>
</evidence>
<evidence type="ECO:0007829" key="9">
    <source>
        <dbReference type="PDB" id="7WBO"/>
    </source>
</evidence>
<sequence length="193" mass="21943">MAYSWDNRVKYVVRYMYDIDNNGYLDKNDFECLALRNTLIEGRGEFNSDAYANNQKIMSNLWNEIAELADFNKDGQVTVDEFKQAVQNLCCGKSFDGFPPCFKTVIGRLFKTIDINGDGLAGVDEYRLDCISRSAFSSVKEIDDAYAKLCTDDDKKAGGISLNRYQELYAQFISNPDEKCNAVYLFGPLKEVQ</sequence>
<reference evidence="8" key="1">
    <citation type="journal article" date="2017" name="J. Agric. Food Chem.">
        <title>Cloning, Expression, and the Effects of Processing on Sarcoplasmic-Calcium-Binding Protein: An Important Allergen in Mud Crab.</title>
        <authorList>
            <person name="Hu M.J."/>
            <person name="Liu G.Y."/>
            <person name="Yang Y."/>
            <person name="Pan T.M."/>
            <person name="Liu Y.X."/>
            <person name="Sun L.C."/>
            <person name="Cao M.J."/>
            <person name="Liu G.M."/>
        </authorList>
    </citation>
    <scope>NUCLEOTIDE SEQUENCE [MRNA]</scope>
    <scope>IDENTIFICATION BY MASS SPECTROMETRY</scope>
    <scope>3D-STRUCTURE MODELING</scope>
    <scope>BIOPHYSICOCHEMICAL PROPERTIES</scope>
    <scope>SUBUNIT</scope>
    <scope>TISSUE SPECIFICITY</scope>
    <scope>ALLERGEN</scope>
    <scope>BIOTECHNOLOGY</scope>
    <scope>CIRCULAR DICHROISM ANALYSIS</scope>
    <source>
        <tissue evidence="5">Skeletal muscle</tissue>
    </source>
</reference>
<reference key="2">
    <citation type="journal article" date="2019" name="Clin. Exp. Allergy">
        <title>A comprehensive analysis of the allergenicity and IgE epitopes of myosinogen allergens in Scylla paramamosain.</title>
        <authorList>
            <person name="Yang Y."/>
            <person name="Hu M.J."/>
            <person name="Jin T.C."/>
            <person name="Zhang Y.X."/>
            <person name="Liu G.Y."/>
            <person name="Li Y.B."/>
            <person name="Zhang M.L."/>
            <person name="Cao M.J."/>
            <person name="Su W.J."/>
            <person name="Liu G.M."/>
        </authorList>
    </citation>
    <scope>TISSUE SPECIFICITY</scope>
    <scope>ALLERGEN</scope>
</reference>
<accession>I2DDG2</accession>
<proteinExistence type="evidence at protein level"/>
<keyword id="KW-0002">3D-structure</keyword>
<keyword id="KW-0020">Allergen</keyword>
<keyword id="KW-0106">Calcium</keyword>
<keyword id="KW-0479">Metal-binding</keyword>
<keyword id="KW-0514">Muscle protein</keyword>
<keyword id="KW-0677">Repeat</keyword>
<organism evidence="8">
    <name type="scientific">Scylla paramamosain</name>
    <name type="common">Mud crab</name>
    <dbReference type="NCBI Taxonomy" id="85552"/>
    <lineage>
        <taxon>Eukaryota</taxon>
        <taxon>Metazoa</taxon>
        <taxon>Ecdysozoa</taxon>
        <taxon>Arthropoda</taxon>
        <taxon>Crustacea</taxon>
        <taxon>Multicrustacea</taxon>
        <taxon>Malacostraca</taxon>
        <taxon>Eumalacostraca</taxon>
        <taxon>Eucarida</taxon>
        <taxon>Decapoda</taxon>
        <taxon>Pleocyemata</taxon>
        <taxon>Brachyura</taxon>
        <taxon>Eubrachyura</taxon>
        <taxon>Portunoidea</taxon>
        <taxon>Portunidae</taxon>
        <taxon>Portuninae</taxon>
        <taxon>Scylla</taxon>
    </lineage>
</organism>
<dbReference type="EMBL" id="JQ860424">
    <property type="protein sequence ID" value="AFJ80778.1"/>
    <property type="molecule type" value="mRNA"/>
</dbReference>
<dbReference type="PDB" id="7WBO">
    <property type="method" value="X-ray"/>
    <property type="resolution" value="1.60 A"/>
    <property type="chains" value="A=1-193"/>
</dbReference>
<dbReference type="PDBsum" id="7WBO"/>
<dbReference type="SMR" id="I2DDG2"/>
<dbReference type="Allergome" id="10174">
    <property type="allergen name" value="Scy p 4"/>
</dbReference>
<dbReference type="Allergome" id="12150">
    <property type="allergen name" value="Scy p 4.0101"/>
</dbReference>
<dbReference type="GO" id="GO:0005509">
    <property type="term" value="F:calcium ion binding"/>
    <property type="evidence" value="ECO:0007669"/>
    <property type="project" value="InterPro"/>
</dbReference>
<dbReference type="GO" id="GO:0042803">
    <property type="term" value="F:protein homodimerization activity"/>
    <property type="evidence" value="ECO:0000314"/>
    <property type="project" value="UniProtKB"/>
</dbReference>
<dbReference type="Gene3D" id="1.10.238.10">
    <property type="entry name" value="EF-hand"/>
    <property type="match status" value="1"/>
</dbReference>
<dbReference type="InterPro" id="IPR011992">
    <property type="entry name" value="EF-hand-dom_pair"/>
</dbReference>
<dbReference type="InterPro" id="IPR018247">
    <property type="entry name" value="EF_Hand_1_Ca_BS"/>
</dbReference>
<dbReference type="InterPro" id="IPR002048">
    <property type="entry name" value="EF_hand_dom"/>
</dbReference>
<dbReference type="Pfam" id="PF13499">
    <property type="entry name" value="EF-hand_7"/>
    <property type="match status" value="1"/>
</dbReference>
<dbReference type="SMART" id="SM00054">
    <property type="entry name" value="EFh"/>
    <property type="match status" value="2"/>
</dbReference>
<dbReference type="SUPFAM" id="SSF47473">
    <property type="entry name" value="EF-hand"/>
    <property type="match status" value="1"/>
</dbReference>
<dbReference type="PROSITE" id="PS00018">
    <property type="entry name" value="EF_HAND_1"/>
    <property type="match status" value="2"/>
</dbReference>
<dbReference type="PROSITE" id="PS50222">
    <property type="entry name" value="EF_HAND_2"/>
    <property type="match status" value="3"/>
</dbReference>
<comment type="function">
    <text evidence="7">Like parvalbumins, SCPs seem to be more abundant in fast contracting muscles, but no functional relationship can be established from this distribution.</text>
</comment>
<comment type="biophysicochemical properties">
    <phDependence>
        <text evidence="3">Relatively stable at broad pH range (pH 1-11). Dimers are formed in strongly acidic (pH 2-5) and alkaline (pH 10-11) conditions.</text>
    </phDependence>
    <temperatureDependence>
        <text evidence="3">Stable at wide temperature range (4-100 degrees Celsius). Heating does not cause degradation, but leads to polymerization. The polymer content is highest at around 70 degrees Celsius.</text>
    </temperatureDependence>
</comment>
<comment type="subunit">
    <text evidence="3">Monomer and dimer.</text>
</comment>
<comment type="tissue specificity">
    <text evidence="3 4">Skeletal muscle (at protein level).</text>
</comment>
<comment type="allergen">
    <text evidence="3 4">Causes an allergic reaction in human. Binds to IgE of patients allergic to crabs (PubMed:28692255, PubMed:30187588). Binds to IgE in 17% of 30 crab-allergic patients tested (PubMed:30187588). Binds to IgE in 100% of 22 patients tested allergic to crustaceans (crabs and/or shrimps) (PubMed:28692255). Activates basophils (PubMed:30187588).</text>
</comment>
<comment type="biotechnology">
    <text evidence="3">The Maillard reaction (glycation) and enzymatic cross-linking reaction are effective methods to reduce allergenicity for the industrial production of hypoallergenic crab meat.</text>
</comment>
<comment type="miscellaneous">
    <text evidence="7">The sarcoplasmic calcium-binding proteins are abundant in the muscle of arthropods, mollusks, annelids, and protochordates.</text>
</comment>
<feature type="chain" id="PRO_0000447339" description="Sarcoplasmic calcium-binding protein">
    <location>
        <begin position="1"/>
        <end position="193"/>
    </location>
</feature>
<feature type="domain" description="EF-hand 1" evidence="2">
    <location>
        <begin position="16"/>
        <end position="40"/>
    </location>
</feature>
<feature type="domain" description="EF-hand 2" evidence="2">
    <location>
        <begin position="57"/>
        <end position="92"/>
    </location>
</feature>
<feature type="domain" description="EF-hand 3" evidence="2">
    <location>
        <begin position="101"/>
        <end position="136"/>
    </location>
</feature>
<feature type="binding site" evidence="2">
    <location>
        <position position="18"/>
    </location>
    <ligand>
        <name>Ca(2+)</name>
        <dbReference type="ChEBI" id="CHEBI:29108"/>
        <label>1</label>
    </ligand>
</feature>
<feature type="binding site" evidence="2">
    <location>
        <position position="20"/>
    </location>
    <ligand>
        <name>Ca(2+)</name>
        <dbReference type="ChEBI" id="CHEBI:29108"/>
        <label>1</label>
    </ligand>
</feature>
<feature type="binding site" evidence="2">
    <location>
        <position position="22"/>
    </location>
    <ligand>
        <name>Ca(2+)</name>
        <dbReference type="ChEBI" id="CHEBI:29108"/>
        <label>1</label>
    </ligand>
</feature>
<feature type="binding site" evidence="2">
    <location>
        <position position="24"/>
    </location>
    <ligand>
        <name>Ca(2+)</name>
        <dbReference type="ChEBI" id="CHEBI:29108"/>
        <label>1</label>
    </ligand>
</feature>
<feature type="binding site" evidence="2">
    <location>
        <position position="29"/>
    </location>
    <ligand>
        <name>Ca(2+)</name>
        <dbReference type="ChEBI" id="CHEBI:29108"/>
        <label>1</label>
    </ligand>
</feature>
<feature type="binding site" evidence="2">
    <location>
        <position position="70"/>
    </location>
    <ligand>
        <name>Ca(2+)</name>
        <dbReference type="ChEBI" id="CHEBI:29108"/>
        <label>2</label>
    </ligand>
</feature>
<feature type="binding site" evidence="2">
    <location>
        <position position="72"/>
    </location>
    <ligand>
        <name>Ca(2+)</name>
        <dbReference type="ChEBI" id="CHEBI:29108"/>
        <label>2</label>
    </ligand>
</feature>
<feature type="binding site" evidence="2">
    <location>
        <position position="74"/>
    </location>
    <ligand>
        <name>Ca(2+)</name>
        <dbReference type="ChEBI" id="CHEBI:29108"/>
        <label>2</label>
    </ligand>
</feature>
<feature type="binding site" evidence="2">
    <location>
        <position position="76"/>
    </location>
    <ligand>
        <name>Ca(2+)</name>
        <dbReference type="ChEBI" id="CHEBI:29108"/>
        <label>2</label>
    </ligand>
</feature>
<feature type="binding site" evidence="2">
    <location>
        <position position="81"/>
    </location>
    <ligand>
        <name>Ca(2+)</name>
        <dbReference type="ChEBI" id="CHEBI:29108"/>
        <label>2</label>
    </ligand>
</feature>
<feature type="binding site" evidence="1">
    <location>
        <position position="114"/>
    </location>
    <ligand>
        <name>Ca(2+)</name>
        <dbReference type="ChEBI" id="CHEBI:29108"/>
        <label>3</label>
    </ligand>
</feature>
<feature type="binding site" evidence="1">
    <location>
        <position position="116"/>
    </location>
    <ligand>
        <name>Ca(2+)</name>
        <dbReference type="ChEBI" id="CHEBI:29108"/>
        <label>3</label>
    </ligand>
</feature>
<feature type="binding site" evidence="1">
    <location>
        <position position="118"/>
    </location>
    <ligand>
        <name>Ca(2+)</name>
        <dbReference type="ChEBI" id="CHEBI:29108"/>
        <label>3</label>
    </ligand>
</feature>
<feature type="binding site" evidence="1">
    <location>
        <position position="125"/>
    </location>
    <ligand>
        <name>Ca(2+)</name>
        <dbReference type="ChEBI" id="CHEBI:29108"/>
        <label>3</label>
    </ligand>
</feature>
<feature type="helix" evidence="9">
    <location>
        <begin position="5"/>
        <end position="16"/>
    </location>
</feature>
<feature type="strand" evidence="9">
    <location>
        <begin position="22"/>
        <end position="25"/>
    </location>
</feature>
<feature type="helix" evidence="9">
    <location>
        <begin position="27"/>
        <end position="41"/>
    </location>
</feature>
<feature type="turn" evidence="9">
    <location>
        <begin position="42"/>
        <end position="44"/>
    </location>
</feature>
<feature type="helix" evidence="9">
    <location>
        <begin position="48"/>
        <end position="69"/>
    </location>
</feature>
<feature type="helix" evidence="9">
    <location>
        <begin position="79"/>
        <end position="89"/>
    </location>
</feature>
<feature type="turn" evidence="9">
    <location>
        <begin position="90"/>
        <end position="92"/>
    </location>
</feature>
<feature type="helix" evidence="9">
    <location>
        <begin position="95"/>
        <end position="97"/>
    </location>
</feature>
<feature type="helix" evidence="9">
    <location>
        <begin position="100"/>
        <end position="113"/>
    </location>
</feature>
<feature type="strand" evidence="9">
    <location>
        <begin position="118"/>
        <end position="121"/>
    </location>
</feature>
<feature type="helix" evidence="9">
    <location>
        <begin position="123"/>
        <end position="131"/>
    </location>
</feature>
<feature type="helix" evidence="9">
    <location>
        <begin position="139"/>
        <end position="149"/>
    </location>
</feature>
<feature type="helix" evidence="9">
    <location>
        <begin position="152"/>
        <end position="157"/>
    </location>
</feature>
<feature type="strand" evidence="9">
    <location>
        <begin position="159"/>
        <end position="161"/>
    </location>
</feature>
<feature type="helix" evidence="9">
    <location>
        <begin position="162"/>
        <end position="174"/>
    </location>
</feature>
<feature type="helix" evidence="9">
    <location>
        <begin position="181"/>
        <end position="184"/>
    </location>
</feature>
<name>SCP_SCYPA</name>